<feature type="chain" id="PRO_0000329686" description="Polyribonucleotide nucleotidyltransferase">
    <location>
        <begin position="1"/>
        <end position="746"/>
    </location>
</feature>
<feature type="domain" description="KH" evidence="1">
    <location>
        <begin position="586"/>
        <end position="648"/>
    </location>
</feature>
<feature type="domain" description="S1 motif" evidence="1">
    <location>
        <begin position="657"/>
        <end position="729"/>
    </location>
</feature>
<feature type="binding site" evidence="1">
    <location>
        <position position="520"/>
    </location>
    <ligand>
        <name>Mg(2+)</name>
        <dbReference type="ChEBI" id="CHEBI:18420"/>
    </ligand>
</feature>
<feature type="binding site" evidence="1">
    <location>
        <position position="526"/>
    </location>
    <ligand>
        <name>Mg(2+)</name>
        <dbReference type="ChEBI" id="CHEBI:18420"/>
    </ligand>
</feature>
<name>PNP_KINRD</name>
<evidence type="ECO:0000255" key="1">
    <source>
        <dbReference type="HAMAP-Rule" id="MF_01595"/>
    </source>
</evidence>
<reference key="1">
    <citation type="journal article" date="2008" name="PLoS ONE">
        <title>Survival in nuclear waste, extreme resistance, and potential applications gleaned from the genome sequence of Kineococcus radiotolerans SRS30216.</title>
        <authorList>
            <person name="Bagwell C.E."/>
            <person name="Bhat S."/>
            <person name="Hawkins G.M."/>
            <person name="Smith B.W."/>
            <person name="Biswas T."/>
            <person name="Hoover T.R."/>
            <person name="Saunders E."/>
            <person name="Han C.S."/>
            <person name="Tsodikov O.V."/>
            <person name="Shimkets L.J."/>
        </authorList>
    </citation>
    <scope>NUCLEOTIDE SEQUENCE [LARGE SCALE GENOMIC DNA]</scope>
    <source>
        <strain>ATCC BAA-149 / DSM 14245 / SRS30216</strain>
    </source>
</reference>
<organism>
    <name type="scientific">Kineococcus radiotolerans (strain ATCC BAA-149 / DSM 14245 / SRS30216)</name>
    <dbReference type="NCBI Taxonomy" id="266940"/>
    <lineage>
        <taxon>Bacteria</taxon>
        <taxon>Bacillati</taxon>
        <taxon>Actinomycetota</taxon>
        <taxon>Actinomycetes</taxon>
        <taxon>Kineosporiales</taxon>
        <taxon>Kineosporiaceae</taxon>
        <taxon>Kineococcus</taxon>
    </lineage>
</organism>
<gene>
    <name evidence="1" type="primary">pnp</name>
    <name type="ordered locus">Krad_1466</name>
</gene>
<proteinExistence type="inferred from homology"/>
<accession>A6W815</accession>
<comment type="function">
    <text evidence="1">Involved in mRNA degradation. Catalyzes the phosphorolysis of single-stranded polyribonucleotides processively in the 3'- to 5'-direction.</text>
</comment>
<comment type="catalytic activity">
    <reaction evidence="1">
        <text>RNA(n+1) + phosphate = RNA(n) + a ribonucleoside 5'-diphosphate</text>
        <dbReference type="Rhea" id="RHEA:22096"/>
        <dbReference type="Rhea" id="RHEA-COMP:14527"/>
        <dbReference type="Rhea" id="RHEA-COMP:17342"/>
        <dbReference type="ChEBI" id="CHEBI:43474"/>
        <dbReference type="ChEBI" id="CHEBI:57930"/>
        <dbReference type="ChEBI" id="CHEBI:140395"/>
        <dbReference type="EC" id="2.7.7.8"/>
    </reaction>
</comment>
<comment type="cofactor">
    <cofactor evidence="1">
        <name>Mg(2+)</name>
        <dbReference type="ChEBI" id="CHEBI:18420"/>
    </cofactor>
</comment>
<comment type="subcellular location">
    <subcellularLocation>
        <location evidence="1">Cytoplasm</location>
    </subcellularLocation>
</comment>
<comment type="similarity">
    <text evidence="1">Belongs to the polyribonucleotide nucleotidyltransferase family.</text>
</comment>
<sequence>MEGPEITAAEAVIDNGSFGTRTIRFETGRLAKQAAGSAAVYLDGESFLLSATTAGKSPKDQFDFFPLTVDVEERSYAAGKIPGSFFRREGRPSTEAILTCRLIDRPLRPSFVKGLRNEVQVVVSVMALHPDDAYDVVAINVASLSTQLSGLPFSGPIGGVRIALIDGQWVAFPRYSELERAVFDMVVAGRVVTTADGSQDVAIMMVEAEATEGSWNLIKDQGATAPTEEVVAAGLEAAKPFIAELVRAQAEVAATAAKPTAAFPTFPDYQDDVYQAVFEAASADLTAALQIGGKQDRETRIDEVKEAVKAQLADAFAGREKEVSAAYRSVQKALIRQRVLKDGVRIDGRGLADIRTLSAEVEVLPRVHGSALFERGETQILGVTTLNMLRMEQQLDTLSPVTRKRYMHNYNFPPYSTGETGRVGSPKRREIGHGALAERALVPVLPAREDFPYAIRQVSEALGSNGSTSMGSVCASTLSLLNAGVPLRAAVAGIAMGLISDTVDGETRYAALTDILGAEDAFGDMDFKVAGTKEFVTAIQLDTKLDGIPASVLAGALTQARDARLHILDVMAEAIDAPDEMSPTAPRIITVKVPVDKIGEVIGPKGKMINQIQEDTGADISIEDDGTVFIGAVDGPSAEAARAAVNAIANPTMPEVGERYLGTVVKTTTFGAFVSLMPGKDGLLHISQLRKLSGGKRVDNVEDVVAVGQKVQVEIAEIDPRGKLSLVPVVAEEASAEAAAAEPADA</sequence>
<keyword id="KW-0963">Cytoplasm</keyword>
<keyword id="KW-0460">Magnesium</keyword>
<keyword id="KW-0479">Metal-binding</keyword>
<keyword id="KW-0548">Nucleotidyltransferase</keyword>
<keyword id="KW-1185">Reference proteome</keyword>
<keyword id="KW-0694">RNA-binding</keyword>
<keyword id="KW-0808">Transferase</keyword>
<protein>
    <recommendedName>
        <fullName evidence="1">Polyribonucleotide nucleotidyltransferase</fullName>
        <ecNumber evidence="1">2.7.7.8</ecNumber>
    </recommendedName>
    <alternativeName>
        <fullName evidence="1">Polynucleotide phosphorylase</fullName>
        <shortName evidence="1">PNPase</shortName>
    </alternativeName>
</protein>
<dbReference type="EC" id="2.7.7.8" evidence="1"/>
<dbReference type="EMBL" id="CP000750">
    <property type="protein sequence ID" value="ABS02954.1"/>
    <property type="molecule type" value="Genomic_DNA"/>
</dbReference>
<dbReference type="RefSeq" id="WP_011981907.1">
    <property type="nucleotide sequence ID" value="NC_009664.2"/>
</dbReference>
<dbReference type="SMR" id="A6W815"/>
<dbReference type="STRING" id="266940.Krad_1466"/>
<dbReference type="KEGG" id="kra:Krad_1466"/>
<dbReference type="eggNOG" id="COG1185">
    <property type="taxonomic scope" value="Bacteria"/>
</dbReference>
<dbReference type="HOGENOM" id="CLU_004217_2_2_11"/>
<dbReference type="OrthoDB" id="9804305at2"/>
<dbReference type="Proteomes" id="UP000001116">
    <property type="component" value="Chromosome"/>
</dbReference>
<dbReference type="GO" id="GO:0005829">
    <property type="term" value="C:cytosol"/>
    <property type="evidence" value="ECO:0007669"/>
    <property type="project" value="TreeGrafter"/>
</dbReference>
<dbReference type="GO" id="GO:0000175">
    <property type="term" value="F:3'-5'-RNA exonuclease activity"/>
    <property type="evidence" value="ECO:0007669"/>
    <property type="project" value="TreeGrafter"/>
</dbReference>
<dbReference type="GO" id="GO:0000287">
    <property type="term" value="F:magnesium ion binding"/>
    <property type="evidence" value="ECO:0007669"/>
    <property type="project" value="UniProtKB-UniRule"/>
</dbReference>
<dbReference type="GO" id="GO:0004654">
    <property type="term" value="F:polyribonucleotide nucleotidyltransferase activity"/>
    <property type="evidence" value="ECO:0007669"/>
    <property type="project" value="UniProtKB-UniRule"/>
</dbReference>
<dbReference type="GO" id="GO:0003723">
    <property type="term" value="F:RNA binding"/>
    <property type="evidence" value="ECO:0007669"/>
    <property type="project" value="UniProtKB-UniRule"/>
</dbReference>
<dbReference type="GO" id="GO:0006402">
    <property type="term" value="P:mRNA catabolic process"/>
    <property type="evidence" value="ECO:0007669"/>
    <property type="project" value="UniProtKB-UniRule"/>
</dbReference>
<dbReference type="GO" id="GO:0006396">
    <property type="term" value="P:RNA processing"/>
    <property type="evidence" value="ECO:0007669"/>
    <property type="project" value="InterPro"/>
</dbReference>
<dbReference type="CDD" id="cd02393">
    <property type="entry name" value="KH-I_PNPase"/>
    <property type="match status" value="1"/>
</dbReference>
<dbReference type="CDD" id="cd11364">
    <property type="entry name" value="RNase_PH_PNPase_2"/>
    <property type="match status" value="1"/>
</dbReference>
<dbReference type="CDD" id="cd04472">
    <property type="entry name" value="S1_PNPase"/>
    <property type="match status" value="1"/>
</dbReference>
<dbReference type="FunFam" id="2.40.50.140:FF:000069">
    <property type="entry name" value="Polyribonucleotide nucleotidyltransferase"/>
    <property type="match status" value="1"/>
</dbReference>
<dbReference type="FunFam" id="3.30.1370.10:FF:000001">
    <property type="entry name" value="Polyribonucleotide nucleotidyltransferase"/>
    <property type="match status" value="1"/>
</dbReference>
<dbReference type="FunFam" id="3.30.230.70:FF:000001">
    <property type="entry name" value="Polyribonucleotide nucleotidyltransferase"/>
    <property type="match status" value="1"/>
</dbReference>
<dbReference type="FunFam" id="3.30.230.70:FF:000002">
    <property type="entry name" value="Polyribonucleotide nucleotidyltransferase"/>
    <property type="match status" value="1"/>
</dbReference>
<dbReference type="Gene3D" id="3.30.230.70">
    <property type="entry name" value="GHMP Kinase, N-terminal domain"/>
    <property type="match status" value="2"/>
</dbReference>
<dbReference type="Gene3D" id="3.30.1370.10">
    <property type="entry name" value="K Homology domain, type 1"/>
    <property type="match status" value="1"/>
</dbReference>
<dbReference type="Gene3D" id="2.40.50.140">
    <property type="entry name" value="Nucleic acid-binding proteins"/>
    <property type="match status" value="1"/>
</dbReference>
<dbReference type="HAMAP" id="MF_01595">
    <property type="entry name" value="PNPase"/>
    <property type="match status" value="1"/>
</dbReference>
<dbReference type="InterPro" id="IPR001247">
    <property type="entry name" value="ExoRNase_PH_dom1"/>
</dbReference>
<dbReference type="InterPro" id="IPR036345">
    <property type="entry name" value="ExoRNase_PH_dom2_sf"/>
</dbReference>
<dbReference type="InterPro" id="IPR014069">
    <property type="entry name" value="GPSI/PNP"/>
</dbReference>
<dbReference type="InterPro" id="IPR004087">
    <property type="entry name" value="KH_dom"/>
</dbReference>
<dbReference type="InterPro" id="IPR004088">
    <property type="entry name" value="KH_dom_type_1"/>
</dbReference>
<dbReference type="InterPro" id="IPR036612">
    <property type="entry name" value="KH_dom_type_1_sf"/>
</dbReference>
<dbReference type="InterPro" id="IPR012340">
    <property type="entry name" value="NA-bd_OB-fold"/>
</dbReference>
<dbReference type="InterPro" id="IPR012162">
    <property type="entry name" value="PNPase"/>
</dbReference>
<dbReference type="InterPro" id="IPR027408">
    <property type="entry name" value="PNPase/RNase_PH_dom_sf"/>
</dbReference>
<dbReference type="InterPro" id="IPR015848">
    <property type="entry name" value="PNPase_PH_RNA-bd_bac/org-type"/>
</dbReference>
<dbReference type="InterPro" id="IPR036456">
    <property type="entry name" value="PNPase_PH_RNA-bd_sf"/>
</dbReference>
<dbReference type="InterPro" id="IPR020568">
    <property type="entry name" value="Ribosomal_Su5_D2-typ_SF"/>
</dbReference>
<dbReference type="InterPro" id="IPR003029">
    <property type="entry name" value="S1_domain"/>
</dbReference>
<dbReference type="NCBIfam" id="TIGR03591">
    <property type="entry name" value="polynuc_phos"/>
    <property type="match status" value="1"/>
</dbReference>
<dbReference type="NCBIfam" id="TIGR02696">
    <property type="entry name" value="pppGpp_PNP"/>
    <property type="match status" value="1"/>
</dbReference>
<dbReference type="NCBIfam" id="NF008805">
    <property type="entry name" value="PRK11824.1"/>
    <property type="match status" value="1"/>
</dbReference>
<dbReference type="PANTHER" id="PTHR11252">
    <property type="entry name" value="POLYRIBONUCLEOTIDE NUCLEOTIDYLTRANSFERASE"/>
    <property type="match status" value="1"/>
</dbReference>
<dbReference type="PANTHER" id="PTHR11252:SF0">
    <property type="entry name" value="POLYRIBONUCLEOTIDE NUCLEOTIDYLTRANSFERASE 1, MITOCHONDRIAL"/>
    <property type="match status" value="1"/>
</dbReference>
<dbReference type="Pfam" id="PF00013">
    <property type="entry name" value="KH_1"/>
    <property type="match status" value="1"/>
</dbReference>
<dbReference type="Pfam" id="PF03726">
    <property type="entry name" value="PNPase"/>
    <property type="match status" value="1"/>
</dbReference>
<dbReference type="Pfam" id="PF01138">
    <property type="entry name" value="RNase_PH"/>
    <property type="match status" value="2"/>
</dbReference>
<dbReference type="Pfam" id="PF00575">
    <property type="entry name" value="S1"/>
    <property type="match status" value="1"/>
</dbReference>
<dbReference type="PIRSF" id="PIRSF005499">
    <property type="entry name" value="PNPase"/>
    <property type="match status" value="1"/>
</dbReference>
<dbReference type="SMART" id="SM00322">
    <property type="entry name" value="KH"/>
    <property type="match status" value="1"/>
</dbReference>
<dbReference type="SMART" id="SM00316">
    <property type="entry name" value="S1"/>
    <property type="match status" value="1"/>
</dbReference>
<dbReference type="SUPFAM" id="SSF54791">
    <property type="entry name" value="Eukaryotic type KH-domain (KH-domain type I)"/>
    <property type="match status" value="1"/>
</dbReference>
<dbReference type="SUPFAM" id="SSF46915">
    <property type="entry name" value="Polynucleotide phosphorylase/guanosine pentaphosphate synthase (PNPase/GPSI), domain 3"/>
    <property type="match status" value="1"/>
</dbReference>
<dbReference type="SUPFAM" id="SSF55666">
    <property type="entry name" value="Ribonuclease PH domain 2-like"/>
    <property type="match status" value="2"/>
</dbReference>
<dbReference type="SUPFAM" id="SSF54211">
    <property type="entry name" value="Ribosomal protein S5 domain 2-like"/>
    <property type="match status" value="2"/>
</dbReference>
<dbReference type="PROSITE" id="PS50084">
    <property type="entry name" value="KH_TYPE_1"/>
    <property type="match status" value="1"/>
</dbReference>
<dbReference type="PROSITE" id="PS50126">
    <property type="entry name" value="S1"/>
    <property type="match status" value="1"/>
</dbReference>